<organism>
    <name type="scientific">Staphylococcus aureus (strain bovine RF122 / ET3-1)</name>
    <dbReference type="NCBI Taxonomy" id="273036"/>
    <lineage>
        <taxon>Bacteria</taxon>
        <taxon>Bacillati</taxon>
        <taxon>Bacillota</taxon>
        <taxon>Bacilli</taxon>
        <taxon>Bacillales</taxon>
        <taxon>Staphylococcaceae</taxon>
        <taxon>Staphylococcus</taxon>
    </lineage>
</organism>
<evidence type="ECO:0000255" key="1">
    <source>
        <dbReference type="HAMAP-Rule" id="MF_00372"/>
    </source>
</evidence>
<accession>Q2YYV8</accession>
<keyword id="KW-0963">Cytoplasm</keyword>
<keyword id="KW-0369">Histidine metabolism</keyword>
<keyword id="KW-0378">Hydrolase</keyword>
<keyword id="KW-0408">Iron</keyword>
<keyword id="KW-0479">Metal-binding</keyword>
<keyword id="KW-0862">Zinc</keyword>
<gene>
    <name evidence="1" type="primary">hutI</name>
    <name type="ordered locus">SAB2207c</name>
</gene>
<reference key="1">
    <citation type="journal article" date="2007" name="PLoS ONE">
        <title>Molecular correlates of host specialization in Staphylococcus aureus.</title>
        <authorList>
            <person name="Herron-Olson L."/>
            <person name="Fitzgerald J.R."/>
            <person name="Musser J.M."/>
            <person name="Kapur V."/>
        </authorList>
    </citation>
    <scope>NUCLEOTIDE SEQUENCE [LARGE SCALE GENOMIC DNA]</scope>
    <source>
        <strain>bovine RF122 / ET3-1</strain>
    </source>
</reference>
<comment type="function">
    <text evidence="1">Catalyzes the hydrolytic cleavage of the carbon-nitrogen bond in imidazolone-5-propanoate to yield N-formimidoyl-L-glutamate. It is the third step in the universal histidine degradation pathway.</text>
</comment>
<comment type="catalytic activity">
    <reaction evidence="1">
        <text>4-imidazolone-5-propanoate + H2O = N-formimidoyl-L-glutamate</text>
        <dbReference type="Rhea" id="RHEA:23660"/>
        <dbReference type="ChEBI" id="CHEBI:15377"/>
        <dbReference type="ChEBI" id="CHEBI:58928"/>
        <dbReference type="ChEBI" id="CHEBI:77893"/>
        <dbReference type="EC" id="3.5.2.7"/>
    </reaction>
</comment>
<comment type="cofactor">
    <cofactor evidence="1">
        <name>Zn(2+)</name>
        <dbReference type="ChEBI" id="CHEBI:29105"/>
    </cofactor>
    <cofactor evidence="1">
        <name>Fe(3+)</name>
        <dbReference type="ChEBI" id="CHEBI:29034"/>
    </cofactor>
    <text evidence="1">Binds 1 zinc or iron ion per subunit.</text>
</comment>
<comment type="pathway">
    <text evidence="1">Amino-acid degradation; L-histidine degradation into L-glutamate; N-formimidoyl-L-glutamate from L-histidine: step 3/3.</text>
</comment>
<comment type="subcellular location">
    <subcellularLocation>
        <location evidence="1">Cytoplasm</location>
    </subcellularLocation>
</comment>
<comment type="similarity">
    <text evidence="1">Belongs to the metallo-dependent hydrolases superfamily. HutI family.</text>
</comment>
<name>HUTI_STAAB</name>
<feature type="chain" id="PRO_0000306519" description="Imidazolonepropionase">
    <location>
        <begin position="1"/>
        <end position="412"/>
    </location>
</feature>
<feature type="binding site" evidence="1">
    <location>
        <position position="76"/>
    </location>
    <ligand>
        <name>Fe(3+)</name>
        <dbReference type="ChEBI" id="CHEBI:29034"/>
    </ligand>
</feature>
<feature type="binding site" evidence="1">
    <location>
        <position position="76"/>
    </location>
    <ligand>
        <name>Zn(2+)</name>
        <dbReference type="ChEBI" id="CHEBI:29105"/>
    </ligand>
</feature>
<feature type="binding site" evidence="1">
    <location>
        <position position="78"/>
    </location>
    <ligand>
        <name>Fe(3+)</name>
        <dbReference type="ChEBI" id="CHEBI:29034"/>
    </ligand>
</feature>
<feature type="binding site" evidence="1">
    <location>
        <position position="78"/>
    </location>
    <ligand>
        <name>Zn(2+)</name>
        <dbReference type="ChEBI" id="CHEBI:29105"/>
    </ligand>
</feature>
<feature type="binding site" evidence="1">
    <location>
        <position position="85"/>
    </location>
    <ligand>
        <name>4-imidazolone-5-propanoate</name>
        <dbReference type="ChEBI" id="CHEBI:77893"/>
    </ligand>
</feature>
<feature type="binding site" evidence="1">
    <location>
        <position position="148"/>
    </location>
    <ligand>
        <name>4-imidazolone-5-propanoate</name>
        <dbReference type="ChEBI" id="CHEBI:77893"/>
    </ligand>
</feature>
<feature type="binding site" evidence="1">
    <location>
        <position position="148"/>
    </location>
    <ligand>
        <name>N-formimidoyl-L-glutamate</name>
        <dbReference type="ChEBI" id="CHEBI:58928"/>
    </ligand>
</feature>
<feature type="binding site" evidence="1">
    <location>
        <position position="181"/>
    </location>
    <ligand>
        <name>4-imidazolone-5-propanoate</name>
        <dbReference type="ChEBI" id="CHEBI:77893"/>
    </ligand>
</feature>
<feature type="binding site" evidence="1">
    <location>
        <position position="242"/>
    </location>
    <ligand>
        <name>Fe(3+)</name>
        <dbReference type="ChEBI" id="CHEBI:29034"/>
    </ligand>
</feature>
<feature type="binding site" evidence="1">
    <location>
        <position position="242"/>
    </location>
    <ligand>
        <name>Zn(2+)</name>
        <dbReference type="ChEBI" id="CHEBI:29105"/>
    </ligand>
</feature>
<feature type="binding site" evidence="1">
    <location>
        <position position="245"/>
    </location>
    <ligand>
        <name>4-imidazolone-5-propanoate</name>
        <dbReference type="ChEBI" id="CHEBI:77893"/>
    </ligand>
</feature>
<feature type="binding site" evidence="1">
    <location>
        <position position="317"/>
    </location>
    <ligand>
        <name>Fe(3+)</name>
        <dbReference type="ChEBI" id="CHEBI:29034"/>
    </ligand>
</feature>
<feature type="binding site" evidence="1">
    <location>
        <position position="317"/>
    </location>
    <ligand>
        <name>Zn(2+)</name>
        <dbReference type="ChEBI" id="CHEBI:29105"/>
    </ligand>
</feature>
<feature type="binding site" evidence="1">
    <location>
        <position position="319"/>
    </location>
    <ligand>
        <name>N-formimidoyl-L-glutamate</name>
        <dbReference type="ChEBI" id="CHEBI:58928"/>
    </ligand>
</feature>
<feature type="binding site" evidence="1">
    <location>
        <position position="321"/>
    </location>
    <ligand>
        <name>N-formimidoyl-L-glutamate</name>
        <dbReference type="ChEBI" id="CHEBI:58928"/>
    </ligand>
</feature>
<feature type="binding site" evidence="1">
    <location>
        <position position="322"/>
    </location>
    <ligand>
        <name>4-imidazolone-5-propanoate</name>
        <dbReference type="ChEBI" id="CHEBI:77893"/>
    </ligand>
</feature>
<sequence length="412" mass="45054">MNDLIINHIAELILPRSTDKPLKGKELDELNVVKNGTVVIKDGKIVYAGQHTDDYDATETIDASGKVVSPALVDAHTHLTFGGSREHEMSLKRQGKSYLEILEMGGGILSTVNATRETSEDDLFKKAEHDLLTMIKHGVLAVESKSGYGLDRENELKQLKVSNRLAEKHDLDMKHTFLGPHAVPKEASSNEAFLEEMIALLPEVKQYADFADIFCETGVFTIEQSQHYMQKAKEAGFKVKIHADEIDPLGGLELAIDEQAISADHLVASSDKGKEKLRNSDTVAVLLPATTFYLGKEDYADARGMLDNNGAIALATDYNPGSSVTNNLQLVMAIAALKLKLSPNEVWNAVTVNAAKAIDINAGTINTGDKANLVIWDAPNHEYIPYHFGINHAEKVIKDGKVIVDNTLSFKA</sequence>
<dbReference type="EC" id="3.5.2.7" evidence="1"/>
<dbReference type="EMBL" id="AJ938182">
    <property type="protein sequence ID" value="CAI81896.1"/>
    <property type="molecule type" value="Genomic_DNA"/>
</dbReference>
<dbReference type="RefSeq" id="WP_000998758.1">
    <property type="nucleotide sequence ID" value="NC_007622.1"/>
</dbReference>
<dbReference type="SMR" id="Q2YYV8"/>
<dbReference type="KEGG" id="sab:SAB2207c"/>
<dbReference type="HOGENOM" id="CLU_041647_0_1_9"/>
<dbReference type="UniPathway" id="UPA00379">
    <property type="reaction ID" value="UER00551"/>
</dbReference>
<dbReference type="GO" id="GO:0005737">
    <property type="term" value="C:cytoplasm"/>
    <property type="evidence" value="ECO:0007669"/>
    <property type="project" value="UniProtKB-SubCell"/>
</dbReference>
<dbReference type="GO" id="GO:0050480">
    <property type="term" value="F:imidazolonepropionase activity"/>
    <property type="evidence" value="ECO:0007669"/>
    <property type="project" value="UniProtKB-UniRule"/>
</dbReference>
<dbReference type="GO" id="GO:0005506">
    <property type="term" value="F:iron ion binding"/>
    <property type="evidence" value="ECO:0007669"/>
    <property type="project" value="UniProtKB-UniRule"/>
</dbReference>
<dbReference type="GO" id="GO:0008270">
    <property type="term" value="F:zinc ion binding"/>
    <property type="evidence" value="ECO:0007669"/>
    <property type="project" value="UniProtKB-UniRule"/>
</dbReference>
<dbReference type="GO" id="GO:0019556">
    <property type="term" value="P:L-histidine catabolic process to glutamate and formamide"/>
    <property type="evidence" value="ECO:0007669"/>
    <property type="project" value="UniProtKB-UniPathway"/>
</dbReference>
<dbReference type="GO" id="GO:0019557">
    <property type="term" value="P:L-histidine catabolic process to glutamate and formate"/>
    <property type="evidence" value="ECO:0007669"/>
    <property type="project" value="UniProtKB-UniPathway"/>
</dbReference>
<dbReference type="CDD" id="cd01296">
    <property type="entry name" value="Imidazolone-5PH"/>
    <property type="match status" value="1"/>
</dbReference>
<dbReference type="FunFam" id="3.20.20.140:FF:000007">
    <property type="entry name" value="Imidazolonepropionase"/>
    <property type="match status" value="1"/>
</dbReference>
<dbReference type="Gene3D" id="3.20.20.140">
    <property type="entry name" value="Metal-dependent hydrolases"/>
    <property type="match status" value="1"/>
</dbReference>
<dbReference type="Gene3D" id="2.30.40.10">
    <property type="entry name" value="Urease, subunit C, domain 1"/>
    <property type="match status" value="1"/>
</dbReference>
<dbReference type="HAMAP" id="MF_00372">
    <property type="entry name" value="HutI"/>
    <property type="match status" value="1"/>
</dbReference>
<dbReference type="InterPro" id="IPR006680">
    <property type="entry name" value="Amidohydro-rel"/>
</dbReference>
<dbReference type="InterPro" id="IPR005920">
    <property type="entry name" value="HutI"/>
</dbReference>
<dbReference type="InterPro" id="IPR011059">
    <property type="entry name" value="Metal-dep_hydrolase_composite"/>
</dbReference>
<dbReference type="InterPro" id="IPR032466">
    <property type="entry name" value="Metal_Hydrolase"/>
</dbReference>
<dbReference type="NCBIfam" id="TIGR01224">
    <property type="entry name" value="hutI"/>
    <property type="match status" value="1"/>
</dbReference>
<dbReference type="PANTHER" id="PTHR42752">
    <property type="entry name" value="IMIDAZOLONEPROPIONASE"/>
    <property type="match status" value="1"/>
</dbReference>
<dbReference type="PANTHER" id="PTHR42752:SF1">
    <property type="entry name" value="IMIDAZOLONEPROPIONASE-RELATED"/>
    <property type="match status" value="1"/>
</dbReference>
<dbReference type="Pfam" id="PF01979">
    <property type="entry name" value="Amidohydro_1"/>
    <property type="match status" value="1"/>
</dbReference>
<dbReference type="SUPFAM" id="SSF51338">
    <property type="entry name" value="Composite domain of metallo-dependent hydrolases"/>
    <property type="match status" value="1"/>
</dbReference>
<dbReference type="SUPFAM" id="SSF51556">
    <property type="entry name" value="Metallo-dependent hydrolases"/>
    <property type="match status" value="1"/>
</dbReference>
<protein>
    <recommendedName>
        <fullName evidence="1">Imidazolonepropionase</fullName>
        <ecNumber evidence="1">3.5.2.7</ecNumber>
    </recommendedName>
    <alternativeName>
        <fullName evidence="1">Imidazolone-5-propionate hydrolase</fullName>
    </alternativeName>
</protein>
<proteinExistence type="inferred from homology"/>